<dbReference type="EC" id="2.1.3.2" evidence="1"/>
<dbReference type="EMBL" id="AJ132624">
    <property type="protein sequence ID" value="CAB89871.1"/>
    <property type="molecule type" value="Genomic_DNA"/>
</dbReference>
<dbReference type="EMBL" id="AM406671">
    <property type="protein sequence ID" value="CAL97487.1"/>
    <property type="molecule type" value="Genomic_DNA"/>
</dbReference>
<dbReference type="RefSeq" id="WP_011834851.1">
    <property type="nucleotide sequence ID" value="NC_009004.1"/>
</dbReference>
<dbReference type="SMR" id="Q9L4N6"/>
<dbReference type="STRING" id="416870.llmg_0893"/>
<dbReference type="KEGG" id="llm:llmg_0893"/>
<dbReference type="eggNOG" id="COG0540">
    <property type="taxonomic scope" value="Bacteria"/>
</dbReference>
<dbReference type="HOGENOM" id="CLU_043846_2_1_9"/>
<dbReference type="OrthoDB" id="9774690at2"/>
<dbReference type="PhylomeDB" id="Q9L4N6"/>
<dbReference type="UniPathway" id="UPA00070">
    <property type="reaction ID" value="UER00116"/>
</dbReference>
<dbReference type="Proteomes" id="UP000000364">
    <property type="component" value="Chromosome"/>
</dbReference>
<dbReference type="GO" id="GO:0005829">
    <property type="term" value="C:cytosol"/>
    <property type="evidence" value="ECO:0007669"/>
    <property type="project" value="TreeGrafter"/>
</dbReference>
<dbReference type="GO" id="GO:0016597">
    <property type="term" value="F:amino acid binding"/>
    <property type="evidence" value="ECO:0007669"/>
    <property type="project" value="InterPro"/>
</dbReference>
<dbReference type="GO" id="GO:0004070">
    <property type="term" value="F:aspartate carbamoyltransferase activity"/>
    <property type="evidence" value="ECO:0007669"/>
    <property type="project" value="UniProtKB-UniRule"/>
</dbReference>
<dbReference type="GO" id="GO:0006207">
    <property type="term" value="P:'de novo' pyrimidine nucleobase biosynthetic process"/>
    <property type="evidence" value="ECO:0007669"/>
    <property type="project" value="InterPro"/>
</dbReference>
<dbReference type="GO" id="GO:0044205">
    <property type="term" value="P:'de novo' UMP biosynthetic process"/>
    <property type="evidence" value="ECO:0007669"/>
    <property type="project" value="UniProtKB-UniRule"/>
</dbReference>
<dbReference type="GO" id="GO:0006520">
    <property type="term" value="P:amino acid metabolic process"/>
    <property type="evidence" value="ECO:0007669"/>
    <property type="project" value="InterPro"/>
</dbReference>
<dbReference type="FunFam" id="3.40.50.1370:FF:000011">
    <property type="entry name" value="Aspartate carbamoyltransferase"/>
    <property type="match status" value="1"/>
</dbReference>
<dbReference type="Gene3D" id="3.40.50.1370">
    <property type="entry name" value="Aspartate/ornithine carbamoyltransferase"/>
    <property type="match status" value="2"/>
</dbReference>
<dbReference type="HAMAP" id="MF_00001">
    <property type="entry name" value="Asp_carb_tr"/>
    <property type="match status" value="1"/>
</dbReference>
<dbReference type="InterPro" id="IPR006132">
    <property type="entry name" value="Asp/Orn_carbamoyltranf_P-bd"/>
</dbReference>
<dbReference type="InterPro" id="IPR006130">
    <property type="entry name" value="Asp/Orn_carbamoylTrfase"/>
</dbReference>
<dbReference type="InterPro" id="IPR036901">
    <property type="entry name" value="Asp/Orn_carbamoylTrfase_sf"/>
</dbReference>
<dbReference type="InterPro" id="IPR002082">
    <property type="entry name" value="Asp_carbamoyltransf"/>
</dbReference>
<dbReference type="InterPro" id="IPR006131">
    <property type="entry name" value="Asp_carbamoyltransf_Asp/Orn-bd"/>
</dbReference>
<dbReference type="NCBIfam" id="TIGR00670">
    <property type="entry name" value="asp_carb_tr"/>
    <property type="match status" value="1"/>
</dbReference>
<dbReference type="NCBIfam" id="NF002032">
    <property type="entry name" value="PRK00856.1"/>
    <property type="match status" value="1"/>
</dbReference>
<dbReference type="PANTHER" id="PTHR45753:SF6">
    <property type="entry name" value="ASPARTATE CARBAMOYLTRANSFERASE"/>
    <property type="match status" value="1"/>
</dbReference>
<dbReference type="PANTHER" id="PTHR45753">
    <property type="entry name" value="ORNITHINE CARBAMOYLTRANSFERASE, MITOCHONDRIAL"/>
    <property type="match status" value="1"/>
</dbReference>
<dbReference type="Pfam" id="PF00185">
    <property type="entry name" value="OTCace"/>
    <property type="match status" value="1"/>
</dbReference>
<dbReference type="Pfam" id="PF02729">
    <property type="entry name" value="OTCace_N"/>
    <property type="match status" value="1"/>
</dbReference>
<dbReference type="PRINTS" id="PR00100">
    <property type="entry name" value="AOTCASE"/>
</dbReference>
<dbReference type="PRINTS" id="PR00101">
    <property type="entry name" value="ATCASE"/>
</dbReference>
<dbReference type="SUPFAM" id="SSF53671">
    <property type="entry name" value="Aspartate/ornithine carbamoyltransferase"/>
    <property type="match status" value="1"/>
</dbReference>
<dbReference type="PROSITE" id="PS00097">
    <property type="entry name" value="CARBAMOYLTRANSFERASE"/>
    <property type="match status" value="1"/>
</dbReference>
<feature type="chain" id="PRO_0000113146" description="Aspartate carbamoyltransferase catalytic subunit">
    <location>
        <begin position="1"/>
        <end position="310"/>
    </location>
</feature>
<feature type="binding site" evidence="1">
    <location>
        <position position="59"/>
    </location>
    <ligand>
        <name>carbamoyl phosphate</name>
        <dbReference type="ChEBI" id="CHEBI:58228"/>
    </ligand>
</feature>
<feature type="binding site" evidence="1">
    <location>
        <position position="60"/>
    </location>
    <ligand>
        <name>carbamoyl phosphate</name>
        <dbReference type="ChEBI" id="CHEBI:58228"/>
    </ligand>
</feature>
<feature type="binding site" evidence="1">
    <location>
        <position position="87"/>
    </location>
    <ligand>
        <name>L-aspartate</name>
        <dbReference type="ChEBI" id="CHEBI:29991"/>
    </ligand>
</feature>
<feature type="binding site" evidence="1">
    <location>
        <position position="109"/>
    </location>
    <ligand>
        <name>carbamoyl phosphate</name>
        <dbReference type="ChEBI" id="CHEBI:58228"/>
    </ligand>
</feature>
<feature type="binding site" evidence="1">
    <location>
        <position position="139"/>
    </location>
    <ligand>
        <name>carbamoyl phosphate</name>
        <dbReference type="ChEBI" id="CHEBI:58228"/>
    </ligand>
</feature>
<feature type="binding site" evidence="1">
    <location>
        <position position="142"/>
    </location>
    <ligand>
        <name>carbamoyl phosphate</name>
        <dbReference type="ChEBI" id="CHEBI:58228"/>
    </ligand>
</feature>
<feature type="binding site" evidence="1">
    <location>
        <position position="172"/>
    </location>
    <ligand>
        <name>L-aspartate</name>
        <dbReference type="ChEBI" id="CHEBI:29991"/>
    </ligand>
</feature>
<feature type="binding site" evidence="1">
    <location>
        <position position="224"/>
    </location>
    <ligand>
        <name>L-aspartate</name>
        <dbReference type="ChEBI" id="CHEBI:29991"/>
    </ligand>
</feature>
<feature type="binding site" evidence="1">
    <location>
        <position position="265"/>
    </location>
    <ligand>
        <name>carbamoyl phosphate</name>
        <dbReference type="ChEBI" id="CHEBI:58228"/>
    </ligand>
</feature>
<feature type="binding site" evidence="1">
    <location>
        <position position="266"/>
    </location>
    <ligand>
        <name>carbamoyl phosphate</name>
        <dbReference type="ChEBI" id="CHEBI:58228"/>
    </ligand>
</feature>
<keyword id="KW-0665">Pyrimidine biosynthesis</keyword>
<keyword id="KW-0808">Transferase</keyword>
<reference key="1">
    <citation type="journal article" date="2001" name="J. Bacteriol.">
        <title>The pyrimidine operon pyrRPB-carA from Lactococcus lactis.</title>
        <authorList>
            <person name="Martinussen J."/>
            <person name="Schallert J."/>
            <person name="Andersen B."/>
            <person name="Hammer K."/>
        </authorList>
    </citation>
    <scope>NUCLEOTIDE SEQUENCE [GENOMIC DNA]</scope>
</reference>
<reference key="2">
    <citation type="journal article" date="2007" name="J. Bacteriol.">
        <title>The complete genome sequence of the lactic acid bacterial paradigm Lactococcus lactis subsp. cremoris MG1363.</title>
        <authorList>
            <person name="Wegmann U."/>
            <person name="O'Connell-Motherway M."/>
            <person name="Zomer A."/>
            <person name="Buist G."/>
            <person name="Shearman C."/>
            <person name="Canchaya C."/>
            <person name="Ventura M."/>
            <person name="Goesmann A."/>
            <person name="Gasson M.J."/>
            <person name="Kuipers O.P."/>
            <person name="van Sinderen D."/>
            <person name="Kok J."/>
        </authorList>
    </citation>
    <scope>NUCLEOTIDE SEQUENCE [LARGE SCALE GENOMIC DNA]</scope>
    <source>
        <strain>MG1363</strain>
    </source>
</reference>
<evidence type="ECO:0000255" key="1">
    <source>
        <dbReference type="HAMAP-Rule" id="MF_00001"/>
    </source>
</evidence>
<comment type="function">
    <text evidence="1">Catalyzes the condensation of carbamoyl phosphate and aspartate to form carbamoyl aspartate and inorganic phosphate, the committed step in the de novo pyrimidine nucleotide biosynthesis pathway.</text>
</comment>
<comment type="catalytic activity">
    <reaction evidence="1">
        <text>carbamoyl phosphate + L-aspartate = N-carbamoyl-L-aspartate + phosphate + H(+)</text>
        <dbReference type="Rhea" id="RHEA:20013"/>
        <dbReference type="ChEBI" id="CHEBI:15378"/>
        <dbReference type="ChEBI" id="CHEBI:29991"/>
        <dbReference type="ChEBI" id="CHEBI:32814"/>
        <dbReference type="ChEBI" id="CHEBI:43474"/>
        <dbReference type="ChEBI" id="CHEBI:58228"/>
        <dbReference type="EC" id="2.1.3.2"/>
    </reaction>
</comment>
<comment type="pathway">
    <text evidence="1">Pyrimidine metabolism; UMP biosynthesis via de novo pathway; (S)-dihydroorotate from bicarbonate: step 2/3.</text>
</comment>
<comment type="subunit">
    <text evidence="1">Heterododecamer (2C3:3R2) of six catalytic PyrB chains organized as two trimers (C3), and six regulatory PyrI chains organized as three dimers (R2).</text>
</comment>
<comment type="similarity">
    <text evidence="1">Belongs to the aspartate/ornithine carbamoyltransferase superfamily. ATCase family.</text>
</comment>
<proteinExistence type="inferred from homology"/>
<sequence>MSVKNGLVQLENLTSMENLSIDEVMGLIKRASAFKAGKADFALDEQTFASNLFFENSTRTHHSFHIAERKLGLDVLEFDAQASSISKGETLYDTVLTLDALGVDICVIRSGVEHYYEELVNSDNIHCAIVNGGDGSGQHPSQCLLDLMTIYEEFGKFEGLKIAISGDLTHSRVAKSNMMMLQKLGARLYFTGPAAWYSEEFDDYGHYANLDRILPELDVHMLLRVQHERHDSGESFSKEGYHTHFGLTQERAKMLKPTAIIMHPAPVNRDVEIADSLVESPQSRIVQQMSNGVYTRMAILEAILAGKKAK</sequence>
<gene>
    <name evidence="1" type="primary">pyrB</name>
    <name type="ordered locus">llmg_0893</name>
</gene>
<organism>
    <name type="scientific">Lactococcus lactis subsp. cremoris (strain MG1363)</name>
    <dbReference type="NCBI Taxonomy" id="416870"/>
    <lineage>
        <taxon>Bacteria</taxon>
        <taxon>Bacillati</taxon>
        <taxon>Bacillota</taxon>
        <taxon>Bacilli</taxon>
        <taxon>Lactobacillales</taxon>
        <taxon>Streptococcaceae</taxon>
        <taxon>Lactococcus</taxon>
        <taxon>Lactococcus cremoris subsp. cremoris</taxon>
    </lineage>
</organism>
<name>PYRB_LACLM</name>
<accession>Q9L4N6</accession>
<accession>A2RJN4</accession>
<protein>
    <recommendedName>
        <fullName evidence="1">Aspartate carbamoyltransferase catalytic subunit</fullName>
        <ecNumber evidence="1">2.1.3.2</ecNumber>
    </recommendedName>
    <alternativeName>
        <fullName evidence="1">Aspartate transcarbamylase</fullName>
        <shortName evidence="1">ATCase</shortName>
    </alternativeName>
</protein>